<sequence length="64" mass="7456">MAKTKGIRISITLECTSCKNNNNKRSTGISRYMTQKNRRNTPNRLELKKFCSHCNQSTIHKEIK</sequence>
<comment type="subcellular location">
    <subcellularLocation>
        <location>Plastid</location>
        <location>Chloroplast</location>
    </subcellularLocation>
</comment>
<comment type="similarity">
    <text evidence="1">Belongs to the bacterial ribosomal protein bL33 family.</text>
</comment>
<name>RK33_MESVI</name>
<geneLocation type="chloroplast"/>
<feature type="chain" id="PRO_0000170288" description="Large ribosomal subunit protein bL33c">
    <location>
        <begin position="1"/>
        <end position="64"/>
    </location>
</feature>
<keyword id="KW-0150">Chloroplast</keyword>
<keyword id="KW-0934">Plastid</keyword>
<keyword id="KW-0687">Ribonucleoprotein</keyword>
<keyword id="KW-0689">Ribosomal protein</keyword>
<reference key="1">
    <citation type="journal article" date="2000" name="Nature">
        <title>Ancestral chloroplast genome in Mesostigma viride reveals an early branch of green plant evolution.</title>
        <authorList>
            <person name="Lemieux C."/>
            <person name="Otis C."/>
            <person name="Turmel M."/>
        </authorList>
    </citation>
    <scope>NUCLEOTIDE SEQUENCE [LARGE SCALE GENOMIC DNA]</scope>
    <source>
        <strain>NIES-296 / KY-14 / CCMP 2046</strain>
    </source>
</reference>
<evidence type="ECO:0000305" key="1"/>
<protein>
    <recommendedName>
        <fullName evidence="1">Large ribosomal subunit protein bL33c</fullName>
    </recommendedName>
    <alternativeName>
        <fullName>50S ribosomal protein L33, chloroplastic</fullName>
    </alternativeName>
</protein>
<organism>
    <name type="scientific">Mesostigma viride</name>
    <name type="common">Green alga</name>
    <dbReference type="NCBI Taxonomy" id="41882"/>
    <lineage>
        <taxon>Eukaryota</taxon>
        <taxon>Viridiplantae</taxon>
        <taxon>Streptophyta</taxon>
        <taxon>Mesostigmatophyceae</taxon>
        <taxon>Mesostigmatales</taxon>
        <taxon>Mesostigmataceae</taxon>
        <taxon>Mesostigma</taxon>
    </lineage>
</organism>
<dbReference type="EMBL" id="AF166114">
    <property type="protein sequence ID" value="AAF43855.1"/>
    <property type="molecule type" value="Genomic_DNA"/>
</dbReference>
<dbReference type="RefSeq" id="NP_038415.1">
    <property type="nucleotide sequence ID" value="NC_002186.1"/>
</dbReference>
<dbReference type="SMR" id="Q9MUP5"/>
<dbReference type="GeneID" id="800956"/>
<dbReference type="GO" id="GO:0009507">
    <property type="term" value="C:chloroplast"/>
    <property type="evidence" value="ECO:0007669"/>
    <property type="project" value="UniProtKB-SubCell"/>
</dbReference>
<dbReference type="GO" id="GO:1990904">
    <property type="term" value="C:ribonucleoprotein complex"/>
    <property type="evidence" value="ECO:0007669"/>
    <property type="project" value="UniProtKB-KW"/>
</dbReference>
<dbReference type="GO" id="GO:0005840">
    <property type="term" value="C:ribosome"/>
    <property type="evidence" value="ECO:0007669"/>
    <property type="project" value="UniProtKB-KW"/>
</dbReference>
<dbReference type="GO" id="GO:0003735">
    <property type="term" value="F:structural constituent of ribosome"/>
    <property type="evidence" value="ECO:0007669"/>
    <property type="project" value="InterPro"/>
</dbReference>
<dbReference type="GO" id="GO:0006412">
    <property type="term" value="P:translation"/>
    <property type="evidence" value="ECO:0007669"/>
    <property type="project" value="UniProtKB-UniRule"/>
</dbReference>
<dbReference type="Gene3D" id="2.20.28.120">
    <property type="entry name" value="Ribosomal protein L33"/>
    <property type="match status" value="1"/>
</dbReference>
<dbReference type="HAMAP" id="MF_00294">
    <property type="entry name" value="Ribosomal_bL33"/>
    <property type="match status" value="1"/>
</dbReference>
<dbReference type="InterPro" id="IPR001705">
    <property type="entry name" value="Ribosomal_bL33"/>
</dbReference>
<dbReference type="InterPro" id="IPR018264">
    <property type="entry name" value="Ribosomal_bL33_CS"/>
</dbReference>
<dbReference type="InterPro" id="IPR038584">
    <property type="entry name" value="Ribosomal_bL33_sf"/>
</dbReference>
<dbReference type="InterPro" id="IPR011332">
    <property type="entry name" value="Ribosomal_zn-bd"/>
</dbReference>
<dbReference type="NCBIfam" id="NF001764">
    <property type="entry name" value="PRK00504.1"/>
    <property type="match status" value="1"/>
</dbReference>
<dbReference type="NCBIfam" id="NF001860">
    <property type="entry name" value="PRK00595.1"/>
    <property type="match status" value="1"/>
</dbReference>
<dbReference type="NCBIfam" id="TIGR01023">
    <property type="entry name" value="rpmG_bact"/>
    <property type="match status" value="1"/>
</dbReference>
<dbReference type="PANTHER" id="PTHR43168">
    <property type="entry name" value="50S RIBOSOMAL PROTEIN L33, CHLOROPLASTIC"/>
    <property type="match status" value="1"/>
</dbReference>
<dbReference type="PANTHER" id="PTHR43168:SF2">
    <property type="entry name" value="LARGE RIBOSOMAL SUBUNIT PROTEIN BL33C"/>
    <property type="match status" value="1"/>
</dbReference>
<dbReference type="Pfam" id="PF00471">
    <property type="entry name" value="Ribosomal_L33"/>
    <property type="match status" value="1"/>
</dbReference>
<dbReference type="SUPFAM" id="SSF57829">
    <property type="entry name" value="Zn-binding ribosomal proteins"/>
    <property type="match status" value="1"/>
</dbReference>
<dbReference type="PROSITE" id="PS00582">
    <property type="entry name" value="RIBOSOMAL_L33"/>
    <property type="match status" value="1"/>
</dbReference>
<accession>Q9MUP5</accession>
<gene>
    <name type="primary">rpl33</name>
</gene>
<proteinExistence type="inferred from homology"/>